<feature type="chain" id="PRO_1000148423" description="UPF0306 protein YhbP">
    <location>
        <begin position="1"/>
        <end position="147"/>
    </location>
</feature>
<reference key="1">
    <citation type="journal article" date="2009" name="PLoS Genet.">
        <title>Organised genome dynamics in the Escherichia coli species results in highly diverse adaptive paths.</title>
        <authorList>
            <person name="Touchon M."/>
            <person name="Hoede C."/>
            <person name="Tenaillon O."/>
            <person name="Barbe V."/>
            <person name="Baeriswyl S."/>
            <person name="Bidet P."/>
            <person name="Bingen E."/>
            <person name="Bonacorsi S."/>
            <person name="Bouchier C."/>
            <person name="Bouvet O."/>
            <person name="Calteau A."/>
            <person name="Chiapello H."/>
            <person name="Clermont O."/>
            <person name="Cruveiller S."/>
            <person name="Danchin A."/>
            <person name="Diard M."/>
            <person name="Dossat C."/>
            <person name="Karoui M.E."/>
            <person name="Frapy E."/>
            <person name="Garry L."/>
            <person name="Ghigo J.M."/>
            <person name="Gilles A.M."/>
            <person name="Johnson J."/>
            <person name="Le Bouguenec C."/>
            <person name="Lescat M."/>
            <person name="Mangenot S."/>
            <person name="Martinez-Jehanne V."/>
            <person name="Matic I."/>
            <person name="Nassif X."/>
            <person name="Oztas S."/>
            <person name="Petit M.A."/>
            <person name="Pichon C."/>
            <person name="Rouy Z."/>
            <person name="Ruf C.S."/>
            <person name="Schneider D."/>
            <person name="Tourret J."/>
            <person name="Vacherie B."/>
            <person name="Vallenet D."/>
            <person name="Medigue C."/>
            <person name="Rocha E.P.C."/>
            <person name="Denamur E."/>
        </authorList>
    </citation>
    <scope>NUCLEOTIDE SEQUENCE [LARGE SCALE GENOMIC DNA]</scope>
    <source>
        <strain>ED1a</strain>
    </source>
</reference>
<protein>
    <recommendedName>
        <fullName evidence="1">UPF0306 protein YhbP</fullName>
    </recommendedName>
</protein>
<comment type="similarity">
    <text evidence="1">Belongs to the UPF0306 family.</text>
</comment>
<dbReference type="EMBL" id="CU928162">
    <property type="protein sequence ID" value="CAR09957.2"/>
    <property type="molecule type" value="Genomic_DNA"/>
</dbReference>
<dbReference type="RefSeq" id="WP_000449457.1">
    <property type="nucleotide sequence ID" value="NC_011745.1"/>
</dbReference>
<dbReference type="SMR" id="B7N0T9"/>
<dbReference type="KEGG" id="ecq:ECED1_3814"/>
<dbReference type="HOGENOM" id="CLU_105087_3_0_6"/>
<dbReference type="Proteomes" id="UP000000748">
    <property type="component" value="Chromosome"/>
</dbReference>
<dbReference type="FunFam" id="2.30.110.10:FF:000003">
    <property type="entry name" value="UPF0306 protein YhbP"/>
    <property type="match status" value="1"/>
</dbReference>
<dbReference type="Gene3D" id="2.30.110.10">
    <property type="entry name" value="Electron Transport, Fmn-binding Protein, Chain A"/>
    <property type="match status" value="1"/>
</dbReference>
<dbReference type="HAMAP" id="MF_00764">
    <property type="entry name" value="UPF0306"/>
    <property type="match status" value="1"/>
</dbReference>
<dbReference type="InterPro" id="IPR012349">
    <property type="entry name" value="Split_barrel_FMN-bd"/>
</dbReference>
<dbReference type="InterPro" id="IPR011194">
    <property type="entry name" value="UPF0306"/>
</dbReference>
<dbReference type="NCBIfam" id="NF002900">
    <property type="entry name" value="PRK03467.1"/>
    <property type="match status" value="1"/>
</dbReference>
<dbReference type="PIRSF" id="PIRSF009554">
    <property type="entry name" value="UCP009554"/>
    <property type="match status" value="1"/>
</dbReference>
<dbReference type="SUPFAM" id="SSF50475">
    <property type="entry name" value="FMN-binding split barrel"/>
    <property type="match status" value="1"/>
</dbReference>
<gene>
    <name evidence="1" type="primary">yhbP</name>
    <name type="ordered locus">ECED1_3814</name>
</gene>
<evidence type="ECO:0000255" key="1">
    <source>
        <dbReference type="HAMAP-Rule" id="MF_00764"/>
    </source>
</evidence>
<name>YHBP_ECO81</name>
<accession>B7N0T9</accession>
<sequence length="147" mass="16763">METLTAISRWLAKQHVVTWCVQQEGELWCANAFYLFDAQKVAFYILTEEKTRHAQMSGPQAAVAGTVNGQPKTVALIRGVQFKGEIRRLEGEESDLARQAYNRRFPVARMLSAPVWEIRLDEIKFTDNTLGFGKKMIWLRNSGTEQA</sequence>
<proteinExistence type="inferred from homology"/>
<organism>
    <name type="scientific">Escherichia coli O81 (strain ED1a)</name>
    <dbReference type="NCBI Taxonomy" id="585397"/>
    <lineage>
        <taxon>Bacteria</taxon>
        <taxon>Pseudomonadati</taxon>
        <taxon>Pseudomonadota</taxon>
        <taxon>Gammaproteobacteria</taxon>
        <taxon>Enterobacterales</taxon>
        <taxon>Enterobacteriaceae</taxon>
        <taxon>Escherichia</taxon>
    </lineage>
</organism>